<sequence>MEQTYVMVKPDGVERGLIGEIVTRIEKKGLKIVAGKLMQIDRELAEKHYAEHIGKSFFEDLIGFITSGPVFAMVLEGDDAIATARRMMGKTNPLEADPGTIRADYAIHTNRNVIHGSDSPESAKREIQLFFAPQEILSYQKAIDTWI</sequence>
<reference key="1">
    <citation type="journal article" date="2004" name="Nucleic Acids Res.">
        <title>Whole genome comparisons of serotype 4b and 1/2a strains of the food-borne pathogen Listeria monocytogenes reveal new insights into the core genome components of this species.</title>
        <authorList>
            <person name="Nelson K.E."/>
            <person name="Fouts D.E."/>
            <person name="Mongodin E.F."/>
            <person name="Ravel J."/>
            <person name="DeBoy R.T."/>
            <person name="Kolonay J.F."/>
            <person name="Rasko D.A."/>
            <person name="Angiuoli S.V."/>
            <person name="Gill S.R."/>
            <person name="Paulsen I.T."/>
            <person name="Peterson J.D."/>
            <person name="White O."/>
            <person name="Nelson W.C."/>
            <person name="Nierman W.C."/>
            <person name="Beanan M.J."/>
            <person name="Brinkac L.M."/>
            <person name="Daugherty S.C."/>
            <person name="Dodson R.J."/>
            <person name="Durkin A.S."/>
            <person name="Madupu R."/>
            <person name="Haft D.H."/>
            <person name="Selengut J."/>
            <person name="Van Aken S.E."/>
            <person name="Khouri H.M."/>
            <person name="Fedorova N."/>
            <person name="Forberger H.A."/>
            <person name="Tran B."/>
            <person name="Kathariou S."/>
            <person name="Wonderling L.D."/>
            <person name="Uhlich G.A."/>
            <person name="Bayles D.O."/>
            <person name="Luchansky J.B."/>
            <person name="Fraser C.M."/>
        </authorList>
    </citation>
    <scope>NUCLEOTIDE SEQUENCE [LARGE SCALE GENOMIC DNA]</scope>
    <source>
        <strain>F2365</strain>
    </source>
</reference>
<dbReference type="EC" id="2.7.4.6" evidence="1"/>
<dbReference type="EMBL" id="AE017262">
    <property type="protein sequence ID" value="AAT04728.1"/>
    <property type="molecule type" value="Genomic_DNA"/>
</dbReference>
<dbReference type="RefSeq" id="WP_009917805.1">
    <property type="nucleotide sequence ID" value="NC_002973.6"/>
</dbReference>
<dbReference type="SMR" id="Q71Y86"/>
<dbReference type="KEGG" id="lmf:LMOf2365_1958"/>
<dbReference type="HOGENOM" id="CLU_060216_6_3_9"/>
<dbReference type="GO" id="GO:0005737">
    <property type="term" value="C:cytoplasm"/>
    <property type="evidence" value="ECO:0007669"/>
    <property type="project" value="UniProtKB-SubCell"/>
</dbReference>
<dbReference type="GO" id="GO:0005524">
    <property type="term" value="F:ATP binding"/>
    <property type="evidence" value="ECO:0007669"/>
    <property type="project" value="UniProtKB-UniRule"/>
</dbReference>
<dbReference type="GO" id="GO:0046872">
    <property type="term" value="F:metal ion binding"/>
    <property type="evidence" value="ECO:0007669"/>
    <property type="project" value="UniProtKB-KW"/>
</dbReference>
<dbReference type="GO" id="GO:0004550">
    <property type="term" value="F:nucleoside diphosphate kinase activity"/>
    <property type="evidence" value="ECO:0007669"/>
    <property type="project" value="UniProtKB-UniRule"/>
</dbReference>
<dbReference type="GO" id="GO:0006241">
    <property type="term" value="P:CTP biosynthetic process"/>
    <property type="evidence" value="ECO:0007669"/>
    <property type="project" value="UniProtKB-UniRule"/>
</dbReference>
<dbReference type="GO" id="GO:0006183">
    <property type="term" value="P:GTP biosynthetic process"/>
    <property type="evidence" value="ECO:0007669"/>
    <property type="project" value="UniProtKB-UniRule"/>
</dbReference>
<dbReference type="GO" id="GO:0006228">
    <property type="term" value="P:UTP biosynthetic process"/>
    <property type="evidence" value="ECO:0007669"/>
    <property type="project" value="UniProtKB-UniRule"/>
</dbReference>
<dbReference type="CDD" id="cd04413">
    <property type="entry name" value="NDPk_I"/>
    <property type="match status" value="1"/>
</dbReference>
<dbReference type="FunFam" id="3.30.70.141:FF:000003">
    <property type="entry name" value="Nucleoside diphosphate kinase"/>
    <property type="match status" value="1"/>
</dbReference>
<dbReference type="Gene3D" id="3.30.70.141">
    <property type="entry name" value="Nucleoside diphosphate kinase-like domain"/>
    <property type="match status" value="1"/>
</dbReference>
<dbReference type="HAMAP" id="MF_00451">
    <property type="entry name" value="NDP_kinase"/>
    <property type="match status" value="1"/>
</dbReference>
<dbReference type="InterPro" id="IPR034907">
    <property type="entry name" value="NDK-like_dom"/>
</dbReference>
<dbReference type="InterPro" id="IPR036850">
    <property type="entry name" value="NDK-like_dom_sf"/>
</dbReference>
<dbReference type="InterPro" id="IPR001564">
    <property type="entry name" value="Nucleoside_diP_kinase"/>
</dbReference>
<dbReference type="InterPro" id="IPR023005">
    <property type="entry name" value="Nucleoside_diP_kinase_AS"/>
</dbReference>
<dbReference type="NCBIfam" id="NF001908">
    <property type="entry name" value="PRK00668.1"/>
    <property type="match status" value="1"/>
</dbReference>
<dbReference type="PANTHER" id="PTHR11349">
    <property type="entry name" value="NUCLEOSIDE DIPHOSPHATE KINASE"/>
    <property type="match status" value="1"/>
</dbReference>
<dbReference type="Pfam" id="PF00334">
    <property type="entry name" value="NDK"/>
    <property type="match status" value="1"/>
</dbReference>
<dbReference type="PRINTS" id="PR01243">
    <property type="entry name" value="NUCDPKINASE"/>
</dbReference>
<dbReference type="SMART" id="SM00562">
    <property type="entry name" value="NDK"/>
    <property type="match status" value="1"/>
</dbReference>
<dbReference type="SUPFAM" id="SSF54919">
    <property type="entry name" value="Nucleoside diphosphate kinase, NDK"/>
    <property type="match status" value="1"/>
</dbReference>
<dbReference type="PROSITE" id="PS00469">
    <property type="entry name" value="NDPK"/>
    <property type="match status" value="1"/>
</dbReference>
<dbReference type="PROSITE" id="PS51374">
    <property type="entry name" value="NDPK_LIKE"/>
    <property type="match status" value="1"/>
</dbReference>
<gene>
    <name evidence="1" type="primary">ndk</name>
    <name type="ordered locus">LMOf2365_1958</name>
</gene>
<proteinExistence type="inferred from homology"/>
<feature type="chain" id="PRO_0000137001" description="Nucleoside diphosphate kinase">
    <location>
        <begin position="1"/>
        <end position="147"/>
    </location>
</feature>
<feature type="active site" description="Pros-phosphohistidine intermediate" evidence="1">
    <location>
        <position position="115"/>
    </location>
</feature>
<feature type="binding site" evidence="1">
    <location>
        <position position="9"/>
    </location>
    <ligand>
        <name>ATP</name>
        <dbReference type="ChEBI" id="CHEBI:30616"/>
    </ligand>
</feature>
<feature type="binding site" evidence="1">
    <location>
        <position position="57"/>
    </location>
    <ligand>
        <name>ATP</name>
        <dbReference type="ChEBI" id="CHEBI:30616"/>
    </ligand>
</feature>
<feature type="binding site" evidence="1">
    <location>
        <position position="85"/>
    </location>
    <ligand>
        <name>ATP</name>
        <dbReference type="ChEBI" id="CHEBI:30616"/>
    </ligand>
</feature>
<feature type="binding site" evidence="1">
    <location>
        <position position="91"/>
    </location>
    <ligand>
        <name>ATP</name>
        <dbReference type="ChEBI" id="CHEBI:30616"/>
    </ligand>
</feature>
<feature type="binding site" evidence="1">
    <location>
        <position position="102"/>
    </location>
    <ligand>
        <name>ATP</name>
        <dbReference type="ChEBI" id="CHEBI:30616"/>
    </ligand>
</feature>
<feature type="binding site" evidence="1">
    <location>
        <position position="112"/>
    </location>
    <ligand>
        <name>ATP</name>
        <dbReference type="ChEBI" id="CHEBI:30616"/>
    </ligand>
</feature>
<comment type="function">
    <text evidence="1">Major role in the synthesis of nucleoside triphosphates other than ATP. The ATP gamma phosphate is transferred to the NDP beta phosphate via a ping-pong mechanism, using a phosphorylated active-site intermediate.</text>
</comment>
<comment type="catalytic activity">
    <reaction evidence="1">
        <text>a 2'-deoxyribonucleoside 5'-diphosphate + ATP = a 2'-deoxyribonucleoside 5'-triphosphate + ADP</text>
        <dbReference type="Rhea" id="RHEA:44640"/>
        <dbReference type="ChEBI" id="CHEBI:30616"/>
        <dbReference type="ChEBI" id="CHEBI:61560"/>
        <dbReference type="ChEBI" id="CHEBI:73316"/>
        <dbReference type="ChEBI" id="CHEBI:456216"/>
        <dbReference type="EC" id="2.7.4.6"/>
    </reaction>
</comment>
<comment type="catalytic activity">
    <reaction evidence="1">
        <text>a ribonucleoside 5'-diphosphate + ATP = a ribonucleoside 5'-triphosphate + ADP</text>
        <dbReference type="Rhea" id="RHEA:18113"/>
        <dbReference type="ChEBI" id="CHEBI:30616"/>
        <dbReference type="ChEBI" id="CHEBI:57930"/>
        <dbReference type="ChEBI" id="CHEBI:61557"/>
        <dbReference type="ChEBI" id="CHEBI:456216"/>
        <dbReference type="EC" id="2.7.4.6"/>
    </reaction>
</comment>
<comment type="cofactor">
    <cofactor evidence="1">
        <name>Mg(2+)</name>
        <dbReference type="ChEBI" id="CHEBI:18420"/>
    </cofactor>
</comment>
<comment type="subunit">
    <text evidence="1">Homotetramer.</text>
</comment>
<comment type="subcellular location">
    <subcellularLocation>
        <location evidence="1">Cytoplasm</location>
    </subcellularLocation>
</comment>
<comment type="similarity">
    <text evidence="1">Belongs to the NDK family.</text>
</comment>
<protein>
    <recommendedName>
        <fullName evidence="1">Nucleoside diphosphate kinase</fullName>
        <shortName evidence="1">NDK</shortName>
        <shortName evidence="1">NDP kinase</shortName>
        <ecNumber evidence="1">2.7.4.6</ecNumber>
    </recommendedName>
    <alternativeName>
        <fullName evidence="1">Nucleoside-2-P kinase</fullName>
    </alternativeName>
</protein>
<keyword id="KW-0067">ATP-binding</keyword>
<keyword id="KW-0963">Cytoplasm</keyword>
<keyword id="KW-0418">Kinase</keyword>
<keyword id="KW-0460">Magnesium</keyword>
<keyword id="KW-0479">Metal-binding</keyword>
<keyword id="KW-0546">Nucleotide metabolism</keyword>
<keyword id="KW-0547">Nucleotide-binding</keyword>
<keyword id="KW-0597">Phosphoprotein</keyword>
<keyword id="KW-0808">Transferase</keyword>
<evidence type="ECO:0000255" key="1">
    <source>
        <dbReference type="HAMAP-Rule" id="MF_00451"/>
    </source>
</evidence>
<accession>Q71Y86</accession>
<organism>
    <name type="scientific">Listeria monocytogenes serotype 4b (strain F2365)</name>
    <dbReference type="NCBI Taxonomy" id="265669"/>
    <lineage>
        <taxon>Bacteria</taxon>
        <taxon>Bacillati</taxon>
        <taxon>Bacillota</taxon>
        <taxon>Bacilli</taxon>
        <taxon>Bacillales</taxon>
        <taxon>Listeriaceae</taxon>
        <taxon>Listeria</taxon>
    </lineage>
</organism>
<name>NDK_LISMF</name>